<protein>
    <recommendedName>
        <fullName>Sodium channel alpha-toxin Acra8</fullName>
    </recommendedName>
</protein>
<accession>M1JMR8</accession>
<comment type="function">
    <text evidence="2">Alpha toxins bind voltage-independently at site-3 of sodium channels (Nav) and inhibit the inactivation of the activated channels, thereby blocking neuronal transmission.</text>
</comment>
<comment type="subcellular location">
    <subcellularLocation>
        <location evidence="1">Secreted</location>
    </subcellularLocation>
</comment>
<comment type="tissue specificity">
    <text evidence="4">Expressed by the venom gland.</text>
</comment>
<comment type="domain">
    <text evidence="4">Has the structural arrangement of an alpha-helix connected to antiparallel beta-sheets by disulfide bonds (CS-alpha/beta).</text>
</comment>
<comment type="similarity">
    <text evidence="4">Belongs to the long (4 C-C) scorpion toxin superfamily. Sodium channel inhibitor family. Alpha subfamily.</text>
</comment>
<organism>
    <name type="scientific">Androctonus crassicauda</name>
    <name type="common">Arabian fat-tailed scorpion</name>
    <dbReference type="NCBI Taxonomy" id="122909"/>
    <lineage>
        <taxon>Eukaryota</taxon>
        <taxon>Metazoa</taxon>
        <taxon>Ecdysozoa</taxon>
        <taxon>Arthropoda</taxon>
        <taxon>Chelicerata</taxon>
        <taxon>Arachnida</taxon>
        <taxon>Scorpiones</taxon>
        <taxon>Buthida</taxon>
        <taxon>Buthoidea</taxon>
        <taxon>Buthidae</taxon>
        <taxon>Androctonus</taxon>
    </lineage>
</organism>
<keyword id="KW-0027">Amidation</keyword>
<keyword id="KW-1015">Disulfide bond</keyword>
<keyword id="KW-0872">Ion channel impairing toxin</keyword>
<keyword id="KW-0528">Neurotoxin</keyword>
<keyword id="KW-0964">Secreted</keyword>
<keyword id="KW-0800">Toxin</keyword>
<keyword id="KW-0738">Voltage-gated sodium channel impairing toxin</keyword>
<evidence type="ECO:0000250" key="1"/>
<evidence type="ECO:0000250" key="2">
    <source>
        <dbReference type="UniProtKB" id="P01481"/>
    </source>
</evidence>
<evidence type="ECO:0000255" key="3">
    <source>
        <dbReference type="PROSITE-ProRule" id="PRU01210"/>
    </source>
</evidence>
<evidence type="ECO:0000305" key="4"/>
<reference key="1">
    <citation type="journal article" date="2013" name="Biochimie">
        <title>Molecular cloning and biochemical characterization of the first Na(+)-channel alpha-type toxin peptide (Acra4) from Androctonus crassicauda scorpion venom.</title>
        <authorList>
            <person name="Caliskan F."/>
            <person name="Quintero-Hernandez V."/>
            <person name="Restano-Cassulini R."/>
            <person name="Coronas-Valderrama F.I."/>
            <person name="Corzo G."/>
            <person name="Possani L.D."/>
        </authorList>
    </citation>
    <scope>NUCLEOTIDE SEQUENCE [MRNA]</scope>
    <source>
        <tissue>Venom gland</tissue>
    </source>
</reference>
<proteinExistence type="inferred from homology"/>
<dbReference type="EMBL" id="JQ975130">
    <property type="protein sequence ID" value="AGE83107.1"/>
    <property type="molecule type" value="mRNA"/>
</dbReference>
<dbReference type="SMR" id="M1JMR8"/>
<dbReference type="GO" id="GO:0005576">
    <property type="term" value="C:extracellular region"/>
    <property type="evidence" value="ECO:0007669"/>
    <property type="project" value="UniProtKB-SubCell"/>
</dbReference>
<dbReference type="GO" id="GO:0019871">
    <property type="term" value="F:sodium channel inhibitor activity"/>
    <property type="evidence" value="ECO:0007669"/>
    <property type="project" value="InterPro"/>
</dbReference>
<dbReference type="GO" id="GO:0090729">
    <property type="term" value="F:toxin activity"/>
    <property type="evidence" value="ECO:0007669"/>
    <property type="project" value="UniProtKB-KW"/>
</dbReference>
<dbReference type="GO" id="GO:0006952">
    <property type="term" value="P:defense response"/>
    <property type="evidence" value="ECO:0007669"/>
    <property type="project" value="InterPro"/>
</dbReference>
<dbReference type="CDD" id="cd23106">
    <property type="entry name" value="neurotoxins_LC_scorpion"/>
    <property type="match status" value="1"/>
</dbReference>
<dbReference type="FunFam" id="3.30.30.10:FF:000002">
    <property type="entry name" value="Alpha-like toxin BmK-M1"/>
    <property type="match status" value="1"/>
</dbReference>
<dbReference type="Gene3D" id="3.30.30.10">
    <property type="entry name" value="Knottin, scorpion toxin-like"/>
    <property type="match status" value="1"/>
</dbReference>
<dbReference type="InterPro" id="IPR044062">
    <property type="entry name" value="LCN-type_CS_alpha_beta_dom"/>
</dbReference>
<dbReference type="InterPro" id="IPR003614">
    <property type="entry name" value="Scorpion_toxin-like"/>
</dbReference>
<dbReference type="InterPro" id="IPR036574">
    <property type="entry name" value="Scorpion_toxin-like_sf"/>
</dbReference>
<dbReference type="InterPro" id="IPR018218">
    <property type="entry name" value="Scorpion_toxinL"/>
</dbReference>
<dbReference type="InterPro" id="IPR002061">
    <property type="entry name" value="Scorpion_toxinL/defensin"/>
</dbReference>
<dbReference type="Pfam" id="PF00537">
    <property type="entry name" value="Toxin_3"/>
    <property type="match status" value="1"/>
</dbReference>
<dbReference type="PRINTS" id="PR00285">
    <property type="entry name" value="SCORPNTOXIN"/>
</dbReference>
<dbReference type="PRINTS" id="PR00284">
    <property type="entry name" value="TOXIN"/>
</dbReference>
<dbReference type="SMART" id="SM00505">
    <property type="entry name" value="Knot1"/>
    <property type="match status" value="1"/>
</dbReference>
<dbReference type="SUPFAM" id="SSF57095">
    <property type="entry name" value="Scorpion toxin-like"/>
    <property type="match status" value="1"/>
</dbReference>
<dbReference type="PROSITE" id="PS51863">
    <property type="entry name" value="LCN_CSAB"/>
    <property type="match status" value="1"/>
</dbReference>
<feature type="chain" id="PRO_5001113115" description="Sodium channel alpha-toxin Acra8">
    <location>
        <begin position="1"/>
        <end position="64"/>
    </location>
</feature>
<feature type="propeptide" id="PRO_0000432480" evidence="2">
    <location>
        <begin position="65"/>
        <end position="66"/>
    </location>
</feature>
<feature type="domain" description="LCN-type CS-alpha/beta" evidence="3">
    <location>
        <begin position="2"/>
        <end position="64"/>
    </location>
</feature>
<feature type="modified residue" description="Asparagine amide" evidence="2">
    <location>
        <position position="64"/>
    </location>
</feature>
<feature type="disulfide bond" evidence="3">
    <location>
        <begin position="12"/>
        <end position="63"/>
    </location>
</feature>
<feature type="disulfide bond" evidence="3">
    <location>
        <begin position="16"/>
        <end position="36"/>
    </location>
</feature>
<feature type="disulfide bond" evidence="3">
    <location>
        <begin position="22"/>
        <end position="46"/>
    </location>
</feature>
<feature type="disulfide bond" evidence="3">
    <location>
        <begin position="26"/>
        <end position="48"/>
    </location>
</feature>
<sequence length="66" mass="7539">VRDGYIVDDKNCTFFCGRNAYCNDECKKKGGESGYCQWASPYGNACWCYKLPDRVPIKEKGRCNGR</sequence>
<name>SCX8_ANDCR</name>